<protein>
    <recommendedName>
        <fullName evidence="4">Conotoxin tx3e</fullName>
    </recommendedName>
    <alternativeName>
        <fullName evidence="4">Conotoxin 4</fullName>
    </alternativeName>
    <component>
        <recommendedName>
            <fullName evidence="4">Truncated conotoxin tx3e</fullName>
        </recommendedName>
    </component>
</protein>
<reference key="1">
    <citation type="journal article" date="2009" name="Proc. Natl. Acad. Sci. U.S.A.">
        <title>Rapid sensitive analysis of cysteine rich peptide venom components.</title>
        <authorList>
            <person name="Ueberheide B.M."/>
            <person name="Fenyo D."/>
            <person name="Alewood P.F."/>
            <person name="Chait B.T."/>
        </authorList>
    </citation>
    <scope>PROTEIN SEQUENCE</scope>
    <scope>SUBCELLULAR LOCATION</scope>
    <scope>MASS SPECTROMETRY</scope>
    <scope>HYDROXYLATION AT PRO-14</scope>
    <source>
        <tissue>Venom</tissue>
    </source>
</reference>
<reference key="2">
    <citation type="journal article" date="2012" name="J. Proteome Res.">
        <title>Constrained de novo sequencing of conotoxins.</title>
        <authorList>
            <person name="Bhatia S."/>
            <person name="Kil Y.J."/>
            <person name="Ueberheide B."/>
            <person name="Chait B.T."/>
            <person name="Tayo L."/>
            <person name="Cruz L."/>
            <person name="Lu B."/>
            <person name="Yates J.R. III"/>
            <person name="Bern M."/>
        </authorList>
    </citation>
    <scope>IDENTIFICATION BY MASS SPECTROMETRY</scope>
    <scope>SUBCELLULAR LOCATION</scope>
    <scope>HYDROXYLATION AT PRO-14</scope>
    <source>
        <tissue>Venom</tissue>
    </source>
</reference>
<evidence type="ECO:0000250" key="1">
    <source>
        <dbReference type="UniProtKB" id="P0C1M9"/>
    </source>
</evidence>
<evidence type="ECO:0000269" key="2">
    <source>
    </source>
</evidence>
<evidence type="ECO:0000269" key="3">
    <source>
    </source>
</evidence>
<evidence type="ECO:0000305" key="4"/>
<evidence type="ECO:0000305" key="5">
    <source>
    </source>
</evidence>
<evidence type="ECO:0000305" key="6">
    <source>
    </source>
</evidence>
<name>M3E_CONTE</name>
<proteinExistence type="evidence at protein level"/>
<comment type="subcellular location">
    <subcellularLocation>
        <location evidence="2">Secreted</location>
    </subcellularLocation>
</comment>
<comment type="tissue specificity">
    <text evidence="5">Expressed by the venom duct.</text>
</comment>
<comment type="domain">
    <text evidence="4">The cysteine framework is III (CC-C-C-CC). Classified in the M-2 branch, since 2 residues stand between the fourth and the fifth cysteine residues.</text>
</comment>
<comment type="PTM">
    <text evidence="2">Contains 3 disulfide bonds.</text>
</comment>
<comment type="PTM">
    <text evidence="3">The truncated conotoxin tx3e is only found with a hydroxyproline, whereas conotoxin tx3e is either hydroxylated or not hydroxylated.</text>
</comment>
<comment type="mass spectrometry" mass="1843.568" error="0.02" method="Electrospray" evidence="2">
    <molecule>Conotoxin tx3e</molecule>
</comment>
<comment type="similarity">
    <text evidence="4">Belongs to the conotoxin M superfamily.</text>
</comment>
<keyword id="KW-0903">Direct protein sequencing</keyword>
<keyword id="KW-1015">Disulfide bond</keyword>
<keyword id="KW-0379">Hydroxylation</keyword>
<keyword id="KW-0964">Secreted</keyword>
<keyword id="KW-0800">Toxin</keyword>
<accession>P86262</accession>
<sequence length="17" mass="1835">SCCNAGFCRFGCTPCCY</sequence>
<feature type="peptide" id="PRO_0000371277" description="Conotoxin tx3e">
    <location>
        <begin position="1"/>
        <end position="17"/>
    </location>
</feature>
<feature type="peptide" id="PRO_0000445121" description="Truncated conotoxin tx3e" evidence="6">
    <location>
        <begin position="2"/>
        <end position="17"/>
    </location>
</feature>
<feature type="modified residue" description="4-hydroxyproline; partial" evidence="2 3">
    <location>
        <position position="14"/>
    </location>
</feature>
<feature type="disulfide bond" evidence="1">
    <location>
        <begin position="2"/>
        <end position="16"/>
    </location>
</feature>
<feature type="disulfide bond" evidence="1">
    <location>
        <begin position="3"/>
        <end position="12"/>
    </location>
</feature>
<feature type="disulfide bond" evidence="1">
    <location>
        <begin position="8"/>
        <end position="15"/>
    </location>
</feature>
<dbReference type="ConoServer" id="3749">
    <property type="toxin name" value="Tx3e"/>
</dbReference>
<dbReference type="GO" id="GO:0005576">
    <property type="term" value="C:extracellular region"/>
    <property type="evidence" value="ECO:0007669"/>
    <property type="project" value="UniProtKB-SubCell"/>
</dbReference>
<dbReference type="GO" id="GO:0090729">
    <property type="term" value="F:toxin activity"/>
    <property type="evidence" value="ECO:0007669"/>
    <property type="project" value="UniProtKB-KW"/>
</dbReference>
<organism>
    <name type="scientific">Conus textile</name>
    <name type="common">Cloth-of-gold cone</name>
    <dbReference type="NCBI Taxonomy" id="6494"/>
    <lineage>
        <taxon>Eukaryota</taxon>
        <taxon>Metazoa</taxon>
        <taxon>Spiralia</taxon>
        <taxon>Lophotrochozoa</taxon>
        <taxon>Mollusca</taxon>
        <taxon>Gastropoda</taxon>
        <taxon>Caenogastropoda</taxon>
        <taxon>Neogastropoda</taxon>
        <taxon>Conoidea</taxon>
        <taxon>Conidae</taxon>
        <taxon>Conus</taxon>
        <taxon>Cylinder</taxon>
    </lineage>
</organism>